<protein>
    <recommendedName>
        <fullName evidence="9">Cartilage intermediate layer protein 2</fullName>
    </recommendedName>
    <component>
        <recommendedName>
            <fullName evidence="1">Cartilage intermediate layer protein 2 C1</fullName>
        </recommendedName>
    </component>
    <component>
        <recommendedName>
            <fullName evidence="1">Cartilage intermediate layer protein 2 C2</fullName>
        </recommendedName>
    </component>
</protein>
<keyword id="KW-0165">Cleavage on pair of basic residues</keyword>
<keyword id="KW-1015">Disulfide bond</keyword>
<keyword id="KW-0272">Extracellular matrix</keyword>
<keyword id="KW-0325">Glycoprotein</keyword>
<keyword id="KW-0393">Immunoglobulin domain</keyword>
<keyword id="KW-1185">Reference proteome</keyword>
<keyword id="KW-0964">Secreted</keyword>
<keyword id="KW-0732">Signal</keyword>
<accession>D3Z7H8</accession>
<dbReference type="EMBL" id="AC158564">
    <property type="status" value="NOT_ANNOTATED_CDS"/>
    <property type="molecule type" value="Genomic_DNA"/>
</dbReference>
<dbReference type="CCDS" id="CCDS40363.1"/>
<dbReference type="RefSeq" id="NP_081094.2">
    <property type="nucleotide sequence ID" value="NM_026818.2"/>
</dbReference>
<dbReference type="FunCoup" id="D3Z7H8">
    <property type="interactions" value="16"/>
</dbReference>
<dbReference type="STRING" id="10090.ENSMUSP00000061544"/>
<dbReference type="GlyCosmos" id="D3Z7H8">
    <property type="glycosylation" value="1 site, No reported glycans"/>
</dbReference>
<dbReference type="GlyGen" id="D3Z7H8">
    <property type="glycosylation" value="3 sites, 1 O-linked glycan (1 site)"/>
</dbReference>
<dbReference type="iPTMnet" id="D3Z7H8"/>
<dbReference type="PhosphoSitePlus" id="D3Z7H8"/>
<dbReference type="jPOST" id="D3Z7H8"/>
<dbReference type="PaxDb" id="10090-ENSMUSP00000061544"/>
<dbReference type="ProteomicsDB" id="283558"/>
<dbReference type="Antibodypedia" id="48010">
    <property type="antibodies" value="76 antibodies from 18 providers"/>
</dbReference>
<dbReference type="Ensembl" id="ENSMUST00000057831.8">
    <property type="protein sequence ID" value="ENSMUSP00000061544.8"/>
    <property type="gene ID" value="ENSMUSG00000044006.9"/>
</dbReference>
<dbReference type="GeneID" id="68709"/>
<dbReference type="KEGG" id="mmu:68709"/>
<dbReference type="UCSC" id="uc009lyb.2">
    <property type="organism name" value="mouse"/>
</dbReference>
<dbReference type="AGR" id="MGI:1915959"/>
<dbReference type="CTD" id="148113"/>
<dbReference type="MGI" id="MGI:1915959">
    <property type="gene designation" value="Cilp2"/>
</dbReference>
<dbReference type="VEuPathDB" id="HostDB:ENSMUSG00000044006"/>
<dbReference type="eggNOG" id="ENOG502QQ8H">
    <property type="taxonomic scope" value="Eukaryota"/>
</dbReference>
<dbReference type="GeneTree" id="ENSGT00390000008152"/>
<dbReference type="HOGENOM" id="CLU_008073_0_0_1"/>
<dbReference type="InParanoid" id="D3Z7H8"/>
<dbReference type="OMA" id="RLEKPYM"/>
<dbReference type="OrthoDB" id="9929167at2759"/>
<dbReference type="PhylomeDB" id="D3Z7H8"/>
<dbReference type="TreeFam" id="TF330132"/>
<dbReference type="BioGRID-ORCS" id="68709">
    <property type="hits" value="1 hit in 79 CRISPR screens"/>
</dbReference>
<dbReference type="ChiTaRS" id="Cilp2">
    <property type="organism name" value="mouse"/>
</dbReference>
<dbReference type="PRO" id="PR:D3Z7H8"/>
<dbReference type="Proteomes" id="UP000000589">
    <property type="component" value="Chromosome 8"/>
</dbReference>
<dbReference type="RNAct" id="D3Z7H8">
    <property type="molecule type" value="protein"/>
</dbReference>
<dbReference type="Bgee" id="ENSMUSG00000044006">
    <property type="expression patterns" value="Expressed in skin of snout and 90 other cell types or tissues"/>
</dbReference>
<dbReference type="GO" id="GO:0005576">
    <property type="term" value="C:extracellular region"/>
    <property type="evidence" value="ECO:0007669"/>
    <property type="project" value="UniProtKB-KW"/>
</dbReference>
<dbReference type="GO" id="GO:0030246">
    <property type="term" value="F:carbohydrate binding"/>
    <property type="evidence" value="ECO:0007669"/>
    <property type="project" value="InterPro"/>
</dbReference>
<dbReference type="FunFam" id="2.60.40.10:FF:001254">
    <property type="entry name" value="Cartilage intermediate layer protein 2"/>
    <property type="match status" value="1"/>
</dbReference>
<dbReference type="Gene3D" id="2.60.40.10">
    <property type="entry name" value="Immunoglobulins"/>
    <property type="match status" value="1"/>
</dbReference>
<dbReference type="Gene3D" id="2.20.100.10">
    <property type="entry name" value="Thrombospondin type-1 (TSP1) repeat"/>
    <property type="match status" value="1"/>
</dbReference>
<dbReference type="InterPro" id="IPR013784">
    <property type="entry name" value="Carb-bd-like_fold"/>
</dbReference>
<dbReference type="InterPro" id="IPR056257">
    <property type="entry name" value="CILP-1/2_8th"/>
</dbReference>
<dbReference type="InterPro" id="IPR056256">
    <property type="entry name" value="CILP-1/2_b-sand_dom2"/>
</dbReference>
<dbReference type="InterPro" id="IPR056258">
    <property type="entry name" value="CILP-1/2_C"/>
</dbReference>
<dbReference type="InterPro" id="IPR056255">
    <property type="entry name" value="CILP-1/2_dom"/>
</dbReference>
<dbReference type="InterPro" id="IPR039675">
    <property type="entry name" value="CILP1/CILP2"/>
</dbReference>
<dbReference type="InterPro" id="IPR007110">
    <property type="entry name" value="Ig-like_dom"/>
</dbReference>
<dbReference type="InterPro" id="IPR036179">
    <property type="entry name" value="Ig-like_dom_sf"/>
</dbReference>
<dbReference type="InterPro" id="IPR013783">
    <property type="entry name" value="Ig-like_fold"/>
</dbReference>
<dbReference type="InterPro" id="IPR003599">
    <property type="entry name" value="Ig_sub"/>
</dbReference>
<dbReference type="InterPro" id="IPR003598">
    <property type="entry name" value="Ig_sub2"/>
</dbReference>
<dbReference type="InterPro" id="IPR000884">
    <property type="entry name" value="TSP1_rpt"/>
</dbReference>
<dbReference type="InterPro" id="IPR036383">
    <property type="entry name" value="TSP1_rpt_sf"/>
</dbReference>
<dbReference type="InterPro" id="IPR025155">
    <property type="entry name" value="WxxW_domain"/>
</dbReference>
<dbReference type="PANTHER" id="PTHR15031:SF0">
    <property type="entry name" value="CARTILAGE INTERMEDIATE LAYER PROTEIN 2"/>
    <property type="match status" value="1"/>
</dbReference>
<dbReference type="PANTHER" id="PTHR15031">
    <property type="entry name" value="CARTILAGE INTERMEDIATE LAYER PROTEIN CLIP"/>
    <property type="match status" value="1"/>
</dbReference>
<dbReference type="Pfam" id="PF13620">
    <property type="entry name" value="CarboxypepD_reg"/>
    <property type="match status" value="1"/>
</dbReference>
<dbReference type="Pfam" id="PF23591">
    <property type="entry name" value="CILP"/>
    <property type="match status" value="1"/>
</dbReference>
<dbReference type="Pfam" id="PF23708">
    <property type="entry name" value="CILP_5th"/>
    <property type="match status" value="1"/>
</dbReference>
<dbReference type="Pfam" id="PF23730">
    <property type="entry name" value="CILP_8th"/>
    <property type="match status" value="1"/>
</dbReference>
<dbReference type="Pfam" id="PF23599">
    <property type="entry name" value="CILP_C"/>
    <property type="match status" value="1"/>
</dbReference>
<dbReference type="Pfam" id="PF13927">
    <property type="entry name" value="Ig_3"/>
    <property type="match status" value="1"/>
</dbReference>
<dbReference type="Pfam" id="PF13330">
    <property type="entry name" value="Mucin2_WxxW"/>
    <property type="match status" value="1"/>
</dbReference>
<dbReference type="Pfam" id="PF00090">
    <property type="entry name" value="TSP_1"/>
    <property type="match status" value="1"/>
</dbReference>
<dbReference type="SMART" id="SM00409">
    <property type="entry name" value="IG"/>
    <property type="match status" value="1"/>
</dbReference>
<dbReference type="SMART" id="SM00408">
    <property type="entry name" value="IGc2"/>
    <property type="match status" value="1"/>
</dbReference>
<dbReference type="SMART" id="SM00209">
    <property type="entry name" value="TSP1"/>
    <property type="match status" value="1"/>
</dbReference>
<dbReference type="SUPFAM" id="SSF48726">
    <property type="entry name" value="Immunoglobulin"/>
    <property type="match status" value="1"/>
</dbReference>
<dbReference type="SUPFAM" id="SSF49452">
    <property type="entry name" value="Starch-binding domain-like"/>
    <property type="match status" value="1"/>
</dbReference>
<dbReference type="SUPFAM" id="SSF82895">
    <property type="entry name" value="TSP-1 type 1 repeat"/>
    <property type="match status" value="1"/>
</dbReference>
<dbReference type="PROSITE" id="PS50835">
    <property type="entry name" value="IG_LIKE"/>
    <property type="match status" value="1"/>
</dbReference>
<dbReference type="PROSITE" id="PS50092">
    <property type="entry name" value="TSP1"/>
    <property type="match status" value="1"/>
</dbReference>
<organism evidence="10">
    <name type="scientific">Mus musculus</name>
    <name type="common">Mouse</name>
    <dbReference type="NCBI Taxonomy" id="10090"/>
    <lineage>
        <taxon>Eukaryota</taxon>
        <taxon>Metazoa</taxon>
        <taxon>Chordata</taxon>
        <taxon>Craniata</taxon>
        <taxon>Vertebrata</taxon>
        <taxon>Euteleostomi</taxon>
        <taxon>Mammalia</taxon>
        <taxon>Eutheria</taxon>
        <taxon>Euarchontoglires</taxon>
        <taxon>Glires</taxon>
        <taxon>Rodentia</taxon>
        <taxon>Myomorpha</taxon>
        <taxon>Muroidea</taxon>
        <taxon>Muridae</taxon>
        <taxon>Murinae</taxon>
        <taxon>Mus</taxon>
        <taxon>Mus</taxon>
    </lineage>
</organism>
<reference key="1">
    <citation type="journal article" date="2009" name="PLoS Biol.">
        <title>Lineage-specific biology revealed by a finished genome assembly of the mouse.</title>
        <authorList>
            <person name="Church D.M."/>
            <person name="Goodstadt L."/>
            <person name="Hillier L.W."/>
            <person name="Zody M.C."/>
            <person name="Goldstein S."/>
            <person name="She X."/>
            <person name="Bult C.J."/>
            <person name="Agarwala R."/>
            <person name="Cherry J.L."/>
            <person name="DiCuccio M."/>
            <person name="Hlavina W."/>
            <person name="Kapustin Y."/>
            <person name="Meric P."/>
            <person name="Maglott D."/>
            <person name="Birtle Z."/>
            <person name="Marques A.C."/>
            <person name="Graves T."/>
            <person name="Zhou S."/>
            <person name="Teague B."/>
            <person name="Potamousis K."/>
            <person name="Churas C."/>
            <person name="Place M."/>
            <person name="Herschleb J."/>
            <person name="Runnheim R."/>
            <person name="Forrest D."/>
            <person name="Amos-Landgraf J."/>
            <person name="Schwartz D.C."/>
            <person name="Cheng Z."/>
            <person name="Lindblad-Toh K."/>
            <person name="Eichler E.E."/>
            <person name="Ponting C.P."/>
        </authorList>
    </citation>
    <scope>NUCLEOTIDE SEQUENCE [LARGE SCALE GENOMIC DNA]</scope>
    <source>
        <strain>C57BL/6J</strain>
    </source>
</reference>
<reference key="2">
    <citation type="journal article" date="2011" name="J. Biol. Chem.">
        <title>Cartilage intermediate layer protein 2 (CILP-2) is expressed in articular and meniscal cartilage and down-regulated in experimental osteoarthritis.</title>
        <authorList>
            <person name="Bernardo B.C."/>
            <person name="Belluoccio D."/>
            <person name="Rowley L."/>
            <person name="Little C.B."/>
            <person name="Hansen U."/>
            <person name="Bateman J.F."/>
        </authorList>
    </citation>
    <scope>TISSUE SPECIFICITY</scope>
    <scope>DEVELOPMENTAL STAGE</scope>
    <scope>GLYCOSYLATION</scope>
</reference>
<gene>
    <name evidence="9" type="primary">Cilp2</name>
</gene>
<evidence type="ECO:0000250" key="1">
    <source>
        <dbReference type="UniProtKB" id="O75339"/>
    </source>
</evidence>
<evidence type="ECO:0000250" key="2">
    <source>
        <dbReference type="UniProtKB" id="Q8IUL8"/>
    </source>
</evidence>
<evidence type="ECO:0000255" key="3"/>
<evidence type="ECO:0000255" key="4">
    <source>
        <dbReference type="PROSITE-ProRule" id="PRU00114"/>
    </source>
</evidence>
<evidence type="ECO:0000255" key="5">
    <source>
        <dbReference type="PROSITE-ProRule" id="PRU00210"/>
    </source>
</evidence>
<evidence type="ECO:0000256" key="6">
    <source>
        <dbReference type="SAM" id="MobiDB-lite"/>
    </source>
</evidence>
<evidence type="ECO:0000269" key="7">
    <source>
    </source>
</evidence>
<evidence type="ECO:0000305" key="8">
    <source>
    </source>
</evidence>
<evidence type="ECO:0000312" key="9">
    <source>
        <dbReference type="MGI" id="MGI:1915959"/>
    </source>
</evidence>
<evidence type="ECO:0000312" key="10">
    <source>
        <dbReference type="Proteomes" id="UP000000589"/>
    </source>
</evidence>
<sequence>MASPLPLLYLCLAALHLAGARDATPTEEHTSTARGLQGRPPDTGQPSPALEDWEEASEWTSWFNVDHPGGDGDFESLAAIRFYYGPARVCPRPLALEARTTDWALPAAMGERVHANPERGFWCLNREQPRGRRCSNYHVRFRCPLEAAWGAWGAWGLCSKSCGLGRRLRRRSCQSSSGDTCPGSPQEAQKCVRSRCPGCSSDTCGCPNHILLGSVVTPSGRPLSGARVSLRTRPGTIATSGTHGTFQVPGVCAGSKASVSAQMNGFSAGTAQAHANSSNTATVTIILEELGKPYLVKHPESRVREAGQNVTFCCKASGTPMPKKYSWFHNGTLLDRRQQGSGPHLELQGLHQAQAGEYHCKAWNEAGTVRSRAALLTILAPGQQACDPRPQEHLIKLPDDCGQPGGGPTYLDVGLCADTRCPGPVGSGPRCGDAGSRCCSVLRLESRDIRCSGYVLPVKVVAECGCRKCLPRRGLVRGRVVAADSGEPLRFARILLGRAPIGFTSYQGDFTIEVPPATERLVVTFVDPSGDFVDSVRVLPFDPRGAGVYHEIRALRKAAAVLLDAERGGEIPLGSTEEAPALGELVLPPGTFHHPDGRPYTGPVEARVTFVDPRDLASASAASSDLRFLDSAGELAPLRTYGMFAVDLRAPGSTEQLHVARADVHVDADHVRMPGHAEALALWSLDPETGLWEEEGSEQGSGGFRRETAAARVRREERAFLVGALTMRERRLFNLDVPERRRCFVKVRAYGTDRFAPAEQVQGVVVTLLNLEPAPGFTANPRAWGRFDSAVTGPNGACVPAFCDAEKPDAYTAFVTAALGGEELEAAPSRPRATAAVVGVAQPYLERLGYQRTDHDDPALKRTGFRLNLARPRAGHESEAHGPVYPWRRLRDCEDAPVTDSHFRFSRVEADKYEYDVVPFHEGAPASWTGDLLAWWPNPQEFRACFLKVRLQGPQEYMVRSHNAGGTHEATRGRLYGLRDTRSVRHPERPGASAACVEFKCGGMLFDQRQVDRTLVTVTPQGSCRRVAVNTLLQDYLARHPPLAAADDPAAFAMLAPLDALGHNYGVYTVTDQSPRLAKEIAIGRCFDGSSDGFSREMKADAGTAVTFQCREPPARPSLFQRLLENPSSALGDIRREMGQATRYSRVNQTQAGDTGPFGPGQ</sequence>
<comment type="function">
    <text evidence="1">May play a role in cartilage scaffolding.</text>
</comment>
<comment type="subcellular location">
    <subcellularLocation>
        <location evidence="2">Secreted</location>
        <location evidence="2">Extracellular space</location>
        <location evidence="2">Extracellular matrix</location>
    </subcellularLocation>
</comment>
<comment type="tissue specificity">
    <text evidence="7">Expressed in articulated and meniscal cartilage (at protein level). Also detected in heart, skeletal muscle and brain. Not detected in growth plate cartilage.</text>
</comment>
<comment type="developmental stage">
    <text evidence="7">In the knee joint, detected in articular cartilage from 2 weeks of age but not at earlier stages (at protein level). Initially localizes to the surface zone of articular cartilage but by maturity (8 weeks) is found in the intermediate to deep zones (at protein level).</text>
</comment>
<comment type="PTM">
    <text evidence="8">May be cleaved into 2 chains possibly by a furin-like protease upon or preceding secretion.</text>
</comment>
<comment type="PTM">
    <text evidence="7">N-glycosylated.</text>
</comment>
<proteinExistence type="evidence at protein level"/>
<feature type="signal peptide" evidence="3">
    <location>
        <begin position="1"/>
        <end position="20"/>
    </location>
</feature>
<feature type="chain" id="PRO_5003052865" description="Cartilage intermediate layer protein 2" evidence="3">
    <location>
        <begin position="21"/>
        <end position="1162"/>
    </location>
</feature>
<feature type="chain" id="PRO_0000437175" description="Cartilage intermediate layer protein 2 C1" evidence="1">
    <location>
        <begin position="22"/>
        <end position="715" status="uncertain"/>
    </location>
</feature>
<feature type="chain" id="PRO_0000437176" description="Cartilage intermediate layer protein 2 C2" evidence="1">
    <location>
        <begin position="716" status="uncertain"/>
        <end position="1162"/>
    </location>
</feature>
<feature type="domain" description="TSP type-1" evidence="5">
    <location>
        <begin position="146"/>
        <end position="197"/>
    </location>
</feature>
<feature type="domain" description="Ig-like C2-type" evidence="4">
    <location>
        <begin position="293"/>
        <end position="377"/>
    </location>
</feature>
<feature type="region of interest" description="Disordered" evidence="6">
    <location>
        <begin position="23"/>
        <end position="51"/>
    </location>
</feature>
<feature type="glycosylation site" description="N-linked (GlcNAc...) asparagine" evidence="3">
    <location>
        <position position="330"/>
    </location>
</feature>
<feature type="disulfide bond" evidence="5">
    <location>
        <begin position="158"/>
        <end position="191"/>
    </location>
</feature>
<feature type="disulfide bond" evidence="5">
    <location>
        <begin position="162"/>
        <end position="196"/>
    </location>
</feature>
<feature type="disulfide bond" evidence="5">
    <location>
        <begin position="173"/>
        <end position="181"/>
    </location>
</feature>
<feature type="disulfide bond" evidence="4">
    <location>
        <begin position="314"/>
        <end position="360"/>
    </location>
</feature>
<name>CILP2_MOUSE</name>